<sequence>MFAIISAGIAPGIALLSYFYLKDQYDNEPVHMVLRSFFLGVVLVFPIMFIQYVLEKENVGGGSFFVSFLSSGFLEESLKWFILMISVYPHAHFDEHYDGIVYGASVSLGFATLENILYLIGHGVEHAFVRALLPVSCHALIGVIMGFYLGKARFSADKARVKWLTLSLVVPSLLHGSYDFILTALSNWIYYMLPFMVFLWWFGLRKAKKARSVNMMQV</sequence>
<feature type="chain" id="PRO_0000049686" description="Protease PrsW">
    <location>
        <begin position="1"/>
        <end position="218"/>
    </location>
</feature>
<feature type="transmembrane region" description="Helical" evidence="6">
    <location>
        <begin position="1"/>
        <end position="23"/>
    </location>
</feature>
<feature type="topological domain" description="Cytoplasmic" evidence="6">
    <location>
        <begin position="24"/>
        <end position="30"/>
    </location>
</feature>
<feature type="transmembrane region" description="Helical" evidence="6">
    <location>
        <begin position="31"/>
        <end position="53"/>
    </location>
</feature>
<feature type="topological domain" description="Extracellular" evidence="6">
    <location>
        <begin position="54"/>
        <end position="98"/>
    </location>
</feature>
<feature type="transmembrane region" description="Helical" evidence="6">
    <location>
        <begin position="99"/>
        <end position="121"/>
    </location>
</feature>
<feature type="topological domain" description="Cytoplasmic" evidence="6">
    <location>
        <begin position="122"/>
        <end position="129"/>
    </location>
</feature>
<feature type="transmembrane region" description="Helical" evidence="6">
    <location>
        <begin position="130"/>
        <end position="151"/>
    </location>
</feature>
<feature type="topological domain" description="Extracellular" evidence="6">
    <location>
        <begin position="152"/>
        <end position="180"/>
    </location>
</feature>
<feature type="transmembrane region" description="Helical" evidence="6">
    <location>
        <begin position="181"/>
        <end position="203"/>
    </location>
</feature>
<feature type="topological domain" description="Cytoplasmic" evidence="6">
    <location>
        <begin position="204"/>
        <end position="218"/>
    </location>
</feature>
<feature type="site" description="Involved in sensing cell envelope stress" evidence="1">
    <location>
        <position position="23"/>
    </location>
</feature>
<feature type="site" description="Involved in sensing cell envelope stress" evidence="1">
    <location>
        <position position="28"/>
    </location>
</feature>
<feature type="site" description="Involved in sensing cell envelope stress" evidence="1">
    <location>
        <position position="95"/>
    </location>
</feature>
<feature type="mutagenesis site" description="Loss of RsiW cleavage activity." evidence="1 3">
    <original>EE</original>
    <variation>AA</variation>
    <location>
        <begin position="75"/>
        <end position="76"/>
    </location>
</feature>
<feature type="mutagenesis site" description="Constitutively active; causes constitutive activation of SigW." evidence="1">
    <original>E</original>
    <variation>K</variation>
    <location>
        <position position="95"/>
    </location>
</feature>
<feature type="mutagenesis site" description="Loss of RsiW cleavage activity." evidence="1">
    <original>H</original>
    <variation>A</variation>
    <location>
        <position position="175"/>
    </location>
</feature>
<organism>
    <name type="scientific">Bacillus subtilis (strain 168)</name>
    <dbReference type="NCBI Taxonomy" id="224308"/>
    <lineage>
        <taxon>Bacteria</taxon>
        <taxon>Bacillati</taxon>
        <taxon>Bacillota</taxon>
        <taxon>Bacilli</taxon>
        <taxon>Bacillales</taxon>
        <taxon>Bacillaceae</taxon>
        <taxon>Bacillus</taxon>
    </lineage>
</organism>
<reference key="1">
    <citation type="journal article" date="1996" name="Microbiology">
        <title>Sequence analysis of the Bacillus subtilis chromosome region between the serA and kdg loci cloned in a yeast artificial chromosome.</title>
        <authorList>
            <person name="Sorokin A.V."/>
            <person name="Azevedo V."/>
            <person name="Zumstein E."/>
            <person name="Galleron N."/>
            <person name="Ehrlich S.D."/>
            <person name="Serror P."/>
        </authorList>
    </citation>
    <scope>NUCLEOTIDE SEQUENCE [GENOMIC DNA]</scope>
    <source>
        <strain>168 / Marburg / ATCC 6051 / DSM 10 / JCM 1465 / NBRC 13719 / NCIMB 3610 / NRRL NRS-744 / VKM B-501</strain>
    </source>
</reference>
<reference key="2">
    <citation type="journal article" date="1997" name="Nature">
        <title>The complete genome sequence of the Gram-positive bacterium Bacillus subtilis.</title>
        <authorList>
            <person name="Kunst F."/>
            <person name="Ogasawara N."/>
            <person name="Moszer I."/>
            <person name="Albertini A.M."/>
            <person name="Alloni G."/>
            <person name="Azevedo V."/>
            <person name="Bertero M.G."/>
            <person name="Bessieres P."/>
            <person name="Bolotin A."/>
            <person name="Borchert S."/>
            <person name="Borriss R."/>
            <person name="Boursier L."/>
            <person name="Brans A."/>
            <person name="Braun M."/>
            <person name="Brignell S.C."/>
            <person name="Bron S."/>
            <person name="Brouillet S."/>
            <person name="Bruschi C.V."/>
            <person name="Caldwell B."/>
            <person name="Capuano V."/>
            <person name="Carter N.M."/>
            <person name="Choi S.-K."/>
            <person name="Codani J.-J."/>
            <person name="Connerton I.F."/>
            <person name="Cummings N.J."/>
            <person name="Daniel R.A."/>
            <person name="Denizot F."/>
            <person name="Devine K.M."/>
            <person name="Duesterhoeft A."/>
            <person name="Ehrlich S.D."/>
            <person name="Emmerson P.T."/>
            <person name="Entian K.-D."/>
            <person name="Errington J."/>
            <person name="Fabret C."/>
            <person name="Ferrari E."/>
            <person name="Foulger D."/>
            <person name="Fritz C."/>
            <person name="Fujita M."/>
            <person name="Fujita Y."/>
            <person name="Fuma S."/>
            <person name="Galizzi A."/>
            <person name="Galleron N."/>
            <person name="Ghim S.-Y."/>
            <person name="Glaser P."/>
            <person name="Goffeau A."/>
            <person name="Golightly E.J."/>
            <person name="Grandi G."/>
            <person name="Guiseppi G."/>
            <person name="Guy B.J."/>
            <person name="Haga K."/>
            <person name="Haiech J."/>
            <person name="Harwood C.R."/>
            <person name="Henaut A."/>
            <person name="Hilbert H."/>
            <person name="Holsappel S."/>
            <person name="Hosono S."/>
            <person name="Hullo M.-F."/>
            <person name="Itaya M."/>
            <person name="Jones L.-M."/>
            <person name="Joris B."/>
            <person name="Karamata D."/>
            <person name="Kasahara Y."/>
            <person name="Klaerr-Blanchard M."/>
            <person name="Klein C."/>
            <person name="Kobayashi Y."/>
            <person name="Koetter P."/>
            <person name="Koningstein G."/>
            <person name="Krogh S."/>
            <person name="Kumano M."/>
            <person name="Kurita K."/>
            <person name="Lapidus A."/>
            <person name="Lardinois S."/>
            <person name="Lauber J."/>
            <person name="Lazarevic V."/>
            <person name="Lee S.-M."/>
            <person name="Levine A."/>
            <person name="Liu H."/>
            <person name="Masuda S."/>
            <person name="Mauel C."/>
            <person name="Medigue C."/>
            <person name="Medina N."/>
            <person name="Mellado R.P."/>
            <person name="Mizuno M."/>
            <person name="Moestl D."/>
            <person name="Nakai S."/>
            <person name="Noback M."/>
            <person name="Noone D."/>
            <person name="O'Reilly M."/>
            <person name="Ogawa K."/>
            <person name="Ogiwara A."/>
            <person name="Oudega B."/>
            <person name="Park S.-H."/>
            <person name="Parro V."/>
            <person name="Pohl T.M."/>
            <person name="Portetelle D."/>
            <person name="Porwollik S."/>
            <person name="Prescott A.M."/>
            <person name="Presecan E."/>
            <person name="Pujic P."/>
            <person name="Purnelle B."/>
            <person name="Rapoport G."/>
            <person name="Rey M."/>
            <person name="Reynolds S."/>
            <person name="Rieger M."/>
            <person name="Rivolta C."/>
            <person name="Rocha E."/>
            <person name="Roche B."/>
            <person name="Rose M."/>
            <person name="Sadaie Y."/>
            <person name="Sato T."/>
            <person name="Scanlan E."/>
            <person name="Schleich S."/>
            <person name="Schroeter R."/>
            <person name="Scoffone F."/>
            <person name="Sekiguchi J."/>
            <person name="Sekowska A."/>
            <person name="Seror S.J."/>
            <person name="Serror P."/>
            <person name="Shin B.-S."/>
            <person name="Soldo B."/>
            <person name="Sorokin A."/>
            <person name="Tacconi E."/>
            <person name="Takagi T."/>
            <person name="Takahashi H."/>
            <person name="Takemaru K."/>
            <person name="Takeuchi M."/>
            <person name="Tamakoshi A."/>
            <person name="Tanaka T."/>
            <person name="Terpstra P."/>
            <person name="Tognoni A."/>
            <person name="Tosato V."/>
            <person name="Uchiyama S."/>
            <person name="Vandenbol M."/>
            <person name="Vannier F."/>
            <person name="Vassarotti A."/>
            <person name="Viari A."/>
            <person name="Wambutt R."/>
            <person name="Wedler E."/>
            <person name="Wedler H."/>
            <person name="Weitzenegger T."/>
            <person name="Winters P."/>
            <person name="Wipat A."/>
            <person name="Yamamoto H."/>
            <person name="Yamane K."/>
            <person name="Yasumoto K."/>
            <person name="Yata K."/>
            <person name="Yoshida K."/>
            <person name="Yoshikawa H.-F."/>
            <person name="Zumstein E."/>
            <person name="Yoshikawa H."/>
            <person name="Danchin A."/>
        </authorList>
    </citation>
    <scope>NUCLEOTIDE SEQUENCE [LARGE SCALE GENOMIC DNA]</scope>
    <source>
        <strain>168</strain>
    </source>
</reference>
<reference key="3">
    <citation type="journal article" date="1996" name="J. Bacteriol.">
        <title>A gene (sleB) encoding a spore cortex-lytic enzyme from Bacillus subtilis and response of the enzyme to L-alanine-mediated germination.</title>
        <authorList>
            <person name="Moriyama R."/>
            <person name="Hattori A."/>
            <person name="Miyata S."/>
            <person name="Kudoh S."/>
            <person name="Makino S."/>
        </authorList>
    </citation>
    <scope>NUCLEOTIDE SEQUENCE [GENOMIC DNA] OF 63-218</scope>
    <source>
        <strain>168</strain>
    </source>
</reference>
<reference key="4">
    <citation type="journal article" date="2006" name="Genes Dev.">
        <title>Evidence for a novel protease governing regulated intramembrane proteolysis and resistance to antimicrobial peptides in Bacillus subtilis.</title>
        <authorList>
            <person name="Ellermeier C.D."/>
            <person name="Losick R."/>
        </authorList>
    </citation>
    <scope>FUNCTION</scope>
    <scope>MUTAGENESIS OF GLU-95; 75-GLU-GLU-76 AND HIS-175</scope>
</reference>
<reference key="5">
    <citation type="journal article" date="2006" name="Mol. Microbiol.">
        <title>YpdC determines site-1 degradation in regulated intramembrane proteolysis of the RsiW anti-sigma factor of Bacillus subtilis.</title>
        <authorList>
            <person name="Heinrich J."/>
            <person name="Wiegert T."/>
        </authorList>
    </citation>
    <scope>FUNCTION</scope>
    <scope>SUBCELLULAR LOCATION</scope>
    <scope>DISRUPTION PHENOTYPE</scope>
    <scope>TOPOLOGY</scope>
    <source>
        <strain>1012</strain>
    </source>
</reference>
<reference key="6">
    <citation type="journal article" date="2009" name="Mol. Microbiol.">
        <title>Two proteolytic modules are involved in regulated intramembrane proteolysis of Bacillus subtilis RsiW.</title>
        <authorList>
            <person name="Heinrich J."/>
            <person name="Hein K."/>
            <person name="Wiegert T."/>
        </authorList>
    </citation>
    <scope>FUNCTION</scope>
    <scope>MUTAGENESIS OF 75-GLU-GLU-76</scope>
    <source>
        <strain>1012</strain>
    </source>
</reference>
<gene>
    <name evidence="4" type="primary">prsW</name>
    <name type="synonym">ypdC</name>
    <name type="ordered locus">BSU22940</name>
</gene>
<proteinExistence type="evidence at protein level"/>
<protein>
    <recommendedName>
        <fullName>Protease PrsW</fullName>
        <ecNumber>3.4.-.-</ecNumber>
    </recommendedName>
    <alternativeName>
        <fullName>Protease responsible for activating sigma-W</fullName>
    </alternativeName>
    <alternativeName>
        <fullName evidence="5">Site-1 protease PrsW</fullName>
        <shortName>S1P protease PrsW</shortName>
    </alternativeName>
</protein>
<keyword id="KW-1003">Cell membrane</keyword>
<keyword id="KW-0378">Hydrolase</keyword>
<keyword id="KW-0472">Membrane</keyword>
<keyword id="KW-0645">Protease</keyword>
<keyword id="KW-1185">Reference proteome</keyword>
<keyword id="KW-0807">Transducer</keyword>
<keyword id="KW-0812">Transmembrane</keyword>
<keyword id="KW-1133">Transmembrane helix</keyword>
<name>PRSW_BACSU</name>
<dbReference type="EC" id="3.4.-.-"/>
<dbReference type="EMBL" id="L47648">
    <property type="protein sequence ID" value="AAC83956.1"/>
    <property type="molecule type" value="Genomic_DNA"/>
</dbReference>
<dbReference type="EMBL" id="AL009126">
    <property type="protein sequence ID" value="CAB14210.1"/>
    <property type="molecule type" value="Genomic_DNA"/>
</dbReference>
<dbReference type="EMBL" id="D79978">
    <property type="protein sequence ID" value="BAA11472.1"/>
    <property type="status" value="ALT_FRAME"/>
    <property type="molecule type" value="Genomic_DNA"/>
</dbReference>
<dbReference type="PIR" id="B69934">
    <property type="entry name" value="B69934"/>
</dbReference>
<dbReference type="PIR" id="T44769">
    <property type="entry name" value="T44769"/>
</dbReference>
<dbReference type="RefSeq" id="NP_390175.1">
    <property type="nucleotide sequence ID" value="NC_000964.3"/>
</dbReference>
<dbReference type="RefSeq" id="WP_003230542.1">
    <property type="nucleotide sequence ID" value="NZ_OZ025638.1"/>
</dbReference>
<dbReference type="FunCoup" id="P50738">
    <property type="interactions" value="3"/>
</dbReference>
<dbReference type="STRING" id="224308.BSU22940"/>
<dbReference type="MEROPS" id="M82.001"/>
<dbReference type="TCDB" id="9.B.217.1.1">
    <property type="family name" value="the transmembrane prsw protease (prsw) family"/>
</dbReference>
<dbReference type="PaxDb" id="224308-BSU22940"/>
<dbReference type="EnsemblBacteria" id="CAB14210">
    <property type="protein sequence ID" value="CAB14210"/>
    <property type="gene ID" value="BSU_22940"/>
</dbReference>
<dbReference type="GeneID" id="938978"/>
<dbReference type="KEGG" id="bsu:BSU22940"/>
<dbReference type="PATRIC" id="fig|224308.179.peg.2501"/>
<dbReference type="eggNOG" id="COG2339">
    <property type="taxonomic scope" value="Bacteria"/>
</dbReference>
<dbReference type="InParanoid" id="P50738"/>
<dbReference type="OrthoDB" id="5504276at2"/>
<dbReference type="PhylomeDB" id="P50738"/>
<dbReference type="BioCyc" id="BSUB:BSU22940-MONOMER"/>
<dbReference type="Proteomes" id="UP000001570">
    <property type="component" value="Chromosome"/>
</dbReference>
<dbReference type="GO" id="GO:0005886">
    <property type="term" value="C:plasma membrane"/>
    <property type="evidence" value="ECO:0007669"/>
    <property type="project" value="UniProtKB-SubCell"/>
</dbReference>
<dbReference type="GO" id="GO:0008233">
    <property type="term" value="F:peptidase activity"/>
    <property type="evidence" value="ECO:0007669"/>
    <property type="project" value="UniProtKB-KW"/>
</dbReference>
<dbReference type="GO" id="GO:0006508">
    <property type="term" value="P:proteolysis"/>
    <property type="evidence" value="ECO:0007669"/>
    <property type="project" value="UniProtKB-KW"/>
</dbReference>
<dbReference type="GO" id="GO:0007165">
    <property type="term" value="P:signal transduction"/>
    <property type="evidence" value="ECO:0007669"/>
    <property type="project" value="UniProtKB-KW"/>
</dbReference>
<dbReference type="InterPro" id="IPR023596">
    <property type="entry name" value="Peptidase_PrsW_arch/bac"/>
</dbReference>
<dbReference type="InterPro" id="IPR026898">
    <property type="entry name" value="PrsW"/>
</dbReference>
<dbReference type="NCBIfam" id="NF033739">
    <property type="entry name" value="intramemb_PrsW"/>
    <property type="match status" value="1"/>
</dbReference>
<dbReference type="PANTHER" id="PTHR36844">
    <property type="entry name" value="PROTEASE PRSW"/>
    <property type="match status" value="1"/>
</dbReference>
<dbReference type="PANTHER" id="PTHR36844:SF1">
    <property type="entry name" value="PROTEASE PRSW"/>
    <property type="match status" value="1"/>
</dbReference>
<dbReference type="Pfam" id="PF13367">
    <property type="entry name" value="PrsW-protease"/>
    <property type="match status" value="1"/>
</dbReference>
<dbReference type="PIRSF" id="PIRSF016933">
    <property type="entry name" value="PrsW"/>
    <property type="match status" value="1"/>
</dbReference>
<accession>P50738</accession>
<accession>P94450</accession>
<evidence type="ECO:0000269" key="1">
    <source>
    </source>
</evidence>
<evidence type="ECO:0000269" key="2">
    <source>
    </source>
</evidence>
<evidence type="ECO:0000269" key="3">
    <source>
    </source>
</evidence>
<evidence type="ECO:0000303" key="4">
    <source>
    </source>
</evidence>
<evidence type="ECO:0000305" key="5"/>
<evidence type="ECO:0000305" key="6">
    <source>
    </source>
</evidence>
<comment type="function">
    <text evidence="1 2 3">Involved in the degradation of anti-sigma-W factor RsiW. Responsible for Site-1 cleavage of the RsiW anti-sigma factor. This results, after two other proteolytic steps catalyzed by the RasP and ClpXP proteases, in the release of SigW and the transcription activation of the genes under the control of the sigma-W factor. Seems to be responsible for sensing antimicrobial peptides that damage the cell membrane and other agents that cause cell envelope stress. Therefore it is a protease governing regulated intramembrane proteolysis and resistance to antimicrobial peptides in B.subtilis.</text>
</comment>
<comment type="subcellular location">
    <subcellularLocation>
        <location evidence="6">Cell membrane</location>
        <topology>Multi-pass membrane protein</topology>
    </subcellularLocation>
</comment>
<comment type="disruption phenotype">
    <text evidence="2">Loss of expression of the SigW regulon (PubMed:17020587).</text>
</comment>
<comment type="similarity">
    <text evidence="5">Belongs to the protease PrsW family.</text>
</comment>
<comment type="sequence caution" evidence="5">
    <conflict type="frameshift">
        <sequence resource="EMBL-CDS" id="BAA11472"/>
    </conflict>
</comment>